<accession>P76235</accession>
<accession>O07964</accession>
<sequence length="427" mass="49392">MTWFIDRRLNGKNKSMVNRQRFLRRYKAQIKQSISEAINKRSVTDVDSGESVSIPTEDISEPMFHQGRGGLRHRVHPGNDHFVQNDRIERPQGGGGGSGSGQGQASQDGEGQDEFVFQISKDEYLDLLFEDLALPNLKQNQQRQLTEYKTHRAGYTANGVPANISVVRSLQNSLARRTAMTAGKRRELHALEENLAIISNSEPAQLLEEERLRKEIAELRAKIERVPFIDTFDLRYKNYEKRPDPSSQAVMFCLMDVSGSMDQSTKDMAKRFYILLYLFLSRTYKNVEVVYIRHHTQAKEVDEHEFFYSQETGGTIVSSALKLMDEVVKERYNPAQWNIYAAQASDGDNWADDSPLCHEILAKKLLPVVRYYSYIEITRRAHQTLWREYEHLQSTFDNFAMQHIRDQDDIYPVFRELFHKQNATAKG</sequence>
<dbReference type="EMBL" id="U00096">
    <property type="protein sequence ID" value="AAC74854.1"/>
    <property type="molecule type" value="Genomic_DNA"/>
</dbReference>
<dbReference type="EMBL" id="AP009048">
    <property type="protein sequence ID" value="BAA15585.1"/>
    <property type="molecule type" value="Genomic_DNA"/>
</dbReference>
<dbReference type="PIR" id="H64938">
    <property type="entry name" value="H64938"/>
</dbReference>
<dbReference type="RefSeq" id="NP_416298.1">
    <property type="nucleotide sequence ID" value="NC_000913.3"/>
</dbReference>
<dbReference type="RefSeq" id="WP_000219687.1">
    <property type="nucleotide sequence ID" value="NZ_SSZK01000001.1"/>
</dbReference>
<dbReference type="SMR" id="P76235"/>
<dbReference type="BioGRID" id="4260313">
    <property type="interactions" value="17"/>
</dbReference>
<dbReference type="DIP" id="DIP-11787N"/>
<dbReference type="FunCoup" id="P76235">
    <property type="interactions" value="16"/>
</dbReference>
<dbReference type="IntAct" id="P76235">
    <property type="interactions" value="1"/>
</dbReference>
<dbReference type="STRING" id="511145.b1784"/>
<dbReference type="jPOST" id="P76235"/>
<dbReference type="PaxDb" id="511145-b1784"/>
<dbReference type="EnsemblBacteria" id="AAC74854">
    <property type="protein sequence ID" value="AAC74854"/>
    <property type="gene ID" value="b1784"/>
</dbReference>
<dbReference type="GeneID" id="946296"/>
<dbReference type="KEGG" id="ecj:JW1773"/>
<dbReference type="KEGG" id="eco:b1784"/>
<dbReference type="KEGG" id="ecoc:C3026_10175"/>
<dbReference type="PATRIC" id="fig|1411691.4.peg.470"/>
<dbReference type="EchoBASE" id="EB3267"/>
<dbReference type="eggNOG" id="COG2718">
    <property type="taxonomic scope" value="Bacteria"/>
</dbReference>
<dbReference type="HOGENOM" id="CLU_049702_0_0_6"/>
<dbReference type="InParanoid" id="P76235"/>
<dbReference type="OMA" id="QYFAYIE"/>
<dbReference type="OrthoDB" id="9788289at2"/>
<dbReference type="PhylomeDB" id="P76235"/>
<dbReference type="BioCyc" id="EcoCyc:G6970-MONOMER"/>
<dbReference type="PRO" id="PR:P76235"/>
<dbReference type="Proteomes" id="UP000000625">
    <property type="component" value="Chromosome"/>
</dbReference>
<dbReference type="HAMAP" id="MF_01232">
    <property type="entry name" value="UPF0229"/>
    <property type="match status" value="1"/>
</dbReference>
<dbReference type="InterPro" id="IPR006698">
    <property type="entry name" value="UPF0229"/>
</dbReference>
<dbReference type="NCBIfam" id="NF003707">
    <property type="entry name" value="PRK05325.1-2"/>
    <property type="match status" value="1"/>
</dbReference>
<dbReference type="NCBIfam" id="NF003708">
    <property type="entry name" value="PRK05325.1-3"/>
    <property type="match status" value="1"/>
</dbReference>
<dbReference type="PANTHER" id="PTHR30510">
    <property type="entry name" value="UPF0229 PROTEIN YEAH"/>
    <property type="match status" value="1"/>
</dbReference>
<dbReference type="PANTHER" id="PTHR30510:SF2">
    <property type="entry name" value="UPF0229 PROTEIN YEAH"/>
    <property type="match status" value="1"/>
</dbReference>
<dbReference type="Pfam" id="PF04285">
    <property type="entry name" value="DUF444"/>
    <property type="match status" value="1"/>
</dbReference>
<comment type="function">
    <text evidence="4">May play a role in the adaptation to sustained nitrogen starvation.</text>
</comment>
<comment type="induction">
    <text evidence="3 4">Expression is probably regulated by NtrC, which binds to the promoter region of the yeaGH operon during nitrogen starvation (PubMed:24947454). Expressed in nitrogen-starved cells shortly after sensing nitrogen starvation (PubMed:26621053). It appears to be continuously expressed for up to 24 hours into nitrogen starvation (PubMed:26621053).</text>
</comment>
<comment type="similarity">
    <text evidence="1 5">Belongs to the UPF0229 family.</text>
</comment>
<proteinExistence type="evidence at transcript level"/>
<keyword id="KW-1185">Reference proteome</keyword>
<keyword id="KW-0346">Stress response</keyword>
<name>YEAH_ECOLI</name>
<gene>
    <name type="primary">yeaH</name>
    <name type="ordered locus">b1784</name>
    <name type="ordered locus">JW1773</name>
</gene>
<feature type="chain" id="PRO_0000068195" description="UPF0229 protein YeaH">
    <location>
        <begin position="1"/>
        <end position="427"/>
    </location>
</feature>
<feature type="region of interest" description="Disordered" evidence="2">
    <location>
        <begin position="79"/>
        <end position="110"/>
    </location>
</feature>
<feature type="compositionally biased region" description="Basic and acidic residues" evidence="2">
    <location>
        <begin position="79"/>
        <end position="90"/>
    </location>
</feature>
<feature type="compositionally biased region" description="Gly residues" evidence="2">
    <location>
        <begin position="92"/>
        <end position="102"/>
    </location>
</feature>
<organism>
    <name type="scientific">Escherichia coli (strain K12)</name>
    <dbReference type="NCBI Taxonomy" id="83333"/>
    <lineage>
        <taxon>Bacteria</taxon>
        <taxon>Pseudomonadati</taxon>
        <taxon>Pseudomonadota</taxon>
        <taxon>Gammaproteobacteria</taxon>
        <taxon>Enterobacterales</taxon>
        <taxon>Enterobacteriaceae</taxon>
        <taxon>Escherichia</taxon>
    </lineage>
</organism>
<protein>
    <recommendedName>
        <fullName evidence="1">UPF0229 protein YeaH</fullName>
    </recommendedName>
</protein>
<reference key="1">
    <citation type="journal article" date="1996" name="DNA Res.">
        <title>A 460-kb DNA sequence of the Escherichia coli K-12 genome corresponding to the 40.1-50.0 min region on the linkage map.</title>
        <authorList>
            <person name="Itoh T."/>
            <person name="Aiba H."/>
            <person name="Baba T."/>
            <person name="Fujita K."/>
            <person name="Hayashi K."/>
            <person name="Inada T."/>
            <person name="Isono K."/>
            <person name="Kasai H."/>
            <person name="Kimura S."/>
            <person name="Kitakawa M."/>
            <person name="Kitagawa M."/>
            <person name="Makino K."/>
            <person name="Miki T."/>
            <person name="Mizobuchi K."/>
            <person name="Mori H."/>
            <person name="Mori T."/>
            <person name="Motomura K."/>
            <person name="Nakade S."/>
            <person name="Nakamura Y."/>
            <person name="Nashimoto H."/>
            <person name="Nishio Y."/>
            <person name="Oshima T."/>
            <person name="Saito N."/>
            <person name="Sampei G."/>
            <person name="Seki Y."/>
            <person name="Sivasundaram S."/>
            <person name="Tagami H."/>
            <person name="Takeda J."/>
            <person name="Takemoto K."/>
            <person name="Wada C."/>
            <person name="Yamamoto Y."/>
            <person name="Horiuchi T."/>
        </authorList>
    </citation>
    <scope>NUCLEOTIDE SEQUENCE [LARGE SCALE GENOMIC DNA]</scope>
    <source>
        <strain>K12 / W3110 / ATCC 27325 / DSM 5911</strain>
    </source>
</reference>
<reference key="2">
    <citation type="journal article" date="1997" name="Science">
        <title>The complete genome sequence of Escherichia coli K-12.</title>
        <authorList>
            <person name="Blattner F.R."/>
            <person name="Plunkett G. III"/>
            <person name="Bloch C.A."/>
            <person name="Perna N.T."/>
            <person name="Burland V."/>
            <person name="Riley M."/>
            <person name="Collado-Vides J."/>
            <person name="Glasner J.D."/>
            <person name="Rode C.K."/>
            <person name="Mayhew G.F."/>
            <person name="Gregor J."/>
            <person name="Davis N.W."/>
            <person name="Kirkpatrick H.A."/>
            <person name="Goeden M.A."/>
            <person name="Rose D.J."/>
            <person name="Mau B."/>
            <person name="Shao Y."/>
        </authorList>
    </citation>
    <scope>NUCLEOTIDE SEQUENCE [LARGE SCALE GENOMIC DNA]</scope>
    <source>
        <strain>K12 / MG1655 / ATCC 47076</strain>
    </source>
</reference>
<reference key="3">
    <citation type="journal article" date="2006" name="Mol. Syst. Biol.">
        <title>Highly accurate genome sequences of Escherichia coli K-12 strains MG1655 and W3110.</title>
        <authorList>
            <person name="Hayashi K."/>
            <person name="Morooka N."/>
            <person name="Yamamoto Y."/>
            <person name="Fujita K."/>
            <person name="Isono K."/>
            <person name="Choi S."/>
            <person name="Ohtsubo E."/>
            <person name="Baba T."/>
            <person name="Wanner B.L."/>
            <person name="Mori H."/>
            <person name="Horiuchi T."/>
        </authorList>
    </citation>
    <scope>NUCLEOTIDE SEQUENCE [LARGE SCALE GENOMIC DNA]</scope>
    <source>
        <strain>K12 / W3110 / ATCC 27325 / DSM 5911</strain>
    </source>
</reference>
<reference key="4">
    <citation type="journal article" date="2014" name="Nat. Commun.">
        <title>Nitrogen stress response and stringent response are coupled in Escherichia coli.</title>
        <authorList>
            <person name="Brown D.R."/>
            <person name="Barton G."/>
            <person name="Pan Z."/>
            <person name="Buck M."/>
            <person name="Wigneshweraraj S."/>
        </authorList>
    </citation>
    <scope>INDUCTION</scope>
</reference>
<reference key="5">
    <citation type="journal article" date="2015" name="Sci. Rep.">
        <title>Adaptation to sustained nitrogen starvation by Escherichia coli requires the eukaryote-like serine/threonine kinase YeaG.</title>
        <authorList>
            <person name="Figueira R."/>
            <person name="Brown D.R."/>
            <person name="Ferreira D."/>
            <person name="Eldridge M.J."/>
            <person name="Burchell L."/>
            <person name="Pan Z."/>
            <person name="Helaine S."/>
            <person name="Wigneshweraraj S."/>
        </authorList>
    </citation>
    <scope>FUNCTION</scope>
    <scope>INDUCTION</scope>
    <source>
        <strain>K12</strain>
    </source>
</reference>
<evidence type="ECO:0000255" key="1">
    <source>
        <dbReference type="HAMAP-Rule" id="MF_01232"/>
    </source>
</evidence>
<evidence type="ECO:0000256" key="2">
    <source>
        <dbReference type="SAM" id="MobiDB-lite"/>
    </source>
</evidence>
<evidence type="ECO:0000269" key="3">
    <source>
    </source>
</evidence>
<evidence type="ECO:0000269" key="4">
    <source>
    </source>
</evidence>
<evidence type="ECO:0000305" key="5"/>